<sequence>MEKKLLGIAILFVTVVSVLAGDPNVPTCLCEEPTLLGRKVIVSQETKDKIEEAVQAITDKDEISGRGFSIFGGHPAFKECGKYECRTVTSEDSRCYNFFPFHHFPSECPVSVSACEPTFGYTTSNELRIIVQAPKAGFRQCVWQHKCRAYGSNFCQRTGRCTQQRSVVRLVTYDLEKGVFFCENVRTCCGCPCRS</sequence>
<organism>
    <name type="scientific">Limulus polyphemus</name>
    <name type="common">Atlantic horseshoe crab</name>
    <dbReference type="NCBI Taxonomy" id="6850"/>
    <lineage>
        <taxon>Eukaryota</taxon>
        <taxon>Metazoa</taxon>
        <taxon>Ecdysozoa</taxon>
        <taxon>Arthropoda</taxon>
        <taxon>Chelicerata</taxon>
        <taxon>Merostomata</taxon>
        <taxon>Xiphosura</taxon>
        <taxon>Limulidae</taxon>
        <taxon>Limulus</taxon>
    </lineage>
</organism>
<accession>P03998</accession>
<comment type="function">
    <text>Coagulogen is a gel-forming protein of hemolymph; it hinders the spread of invaders by immobilizing them.</text>
</comment>
<comment type="subunit">
    <text>Coagulogen is cleaved after Arg-38 and Arg-66 by a clotting enzyme contained in the hemocyte and activated by a bacterial endotoxin (lipopolysaccharide). This cleavage releases the peptide C and leaves 2 chains of coagulin, A and B, linked by two disulfide bonds. Coagulin molecules interlink to form a gel.</text>
</comment>
<comment type="subcellular location">
    <subcellularLocation>
        <location>Secreted</location>
    </subcellularLocation>
</comment>
<comment type="tissue specificity">
    <text>Hemolymph.</text>
</comment>
<comment type="similarity">
    <text evidence="3">Belongs to the coagulin family.</text>
</comment>
<protein>
    <recommendedName>
        <fullName>Coagulogen</fullName>
    </recommendedName>
    <component>
        <recommendedName>
            <fullName>Coagulin chain A</fullName>
        </recommendedName>
    </component>
    <component>
        <recommendedName>
            <fullName>Peptide C</fullName>
        </recommendedName>
    </component>
    <component>
        <recommendedName>
            <fullName>Coagulin chain B</fullName>
        </recommendedName>
    </component>
</protein>
<proteinExistence type="evidence at protein level"/>
<reference key="1">
    <citation type="journal article" date="1986" name="Biochim. Biophys. Acta">
        <title>Characterization of a complementary deoxyribonucleic acid for the coagulogen of Limulus polyphemus.</title>
        <authorList>
            <person name="Cheng S.M."/>
            <person name="Suzuki A."/>
            <person name="Zon G."/>
            <person name="Liu T.Y."/>
        </authorList>
    </citation>
    <scope>NUCLEOTIDE SEQUENCE [MRNA]</scope>
</reference>
<reference key="2">
    <citation type="journal article" date="1984" name="J. Biol. Chem.">
        <title>Amino acid sequence of the coagulogen from Limulus polyphemus hemocytes.</title>
        <authorList>
            <person name="Miyata T."/>
            <person name="Hiranaga M."/>
            <person name="Umezu M."/>
            <person name="Iwanaga S."/>
        </authorList>
    </citation>
    <scope>PROTEIN SEQUENCE OF 21-195</scope>
</reference>
<name>COAG_LIMPO</name>
<keyword id="KW-0903">Direct protein sequencing</keyword>
<keyword id="KW-1015">Disulfide bond</keyword>
<keyword id="KW-0353">Hemolymph clotting</keyword>
<keyword id="KW-0964">Secreted</keyword>
<keyword id="KW-0732">Signal</keyword>
<evidence type="ECO:0000250" key="1"/>
<evidence type="ECO:0000269" key="2">
    <source>
    </source>
</evidence>
<evidence type="ECO:0000305" key="3"/>
<dbReference type="EMBL" id="X04424">
    <property type="protein sequence ID" value="CAA28020.1"/>
    <property type="molecule type" value="mRNA"/>
</dbReference>
<dbReference type="PIR" id="A43790">
    <property type="entry name" value="WCHCA"/>
</dbReference>
<dbReference type="RefSeq" id="XP_013783200.1">
    <property type="nucleotide sequence ID" value="XM_013927746.2"/>
</dbReference>
<dbReference type="SMR" id="P03998"/>
<dbReference type="EnsemblMetazoa" id="XM_013927746.2">
    <property type="protein sequence ID" value="XP_013783200.1"/>
    <property type="gene ID" value="LOC106467396"/>
</dbReference>
<dbReference type="GeneID" id="106467396"/>
<dbReference type="KEGG" id="lpol:106467396"/>
<dbReference type="Proteomes" id="UP000694941">
    <property type="component" value="Unplaced"/>
</dbReference>
<dbReference type="GO" id="GO:0005576">
    <property type="term" value="C:extracellular region"/>
    <property type="evidence" value="ECO:0007669"/>
    <property type="project" value="UniProtKB-SubCell"/>
</dbReference>
<dbReference type="GO" id="GO:0042381">
    <property type="term" value="P:hemolymph coagulation"/>
    <property type="evidence" value="ECO:0007669"/>
    <property type="project" value="UniProtKB-KW"/>
</dbReference>
<dbReference type="Gene3D" id="2.10.90.10">
    <property type="entry name" value="Cystine-knot cytokines"/>
    <property type="match status" value="1"/>
</dbReference>
<dbReference type="InterPro" id="IPR000275">
    <property type="entry name" value="Coagulin"/>
</dbReference>
<dbReference type="InterPro" id="IPR029034">
    <property type="entry name" value="Cystine-knot_cytokine"/>
</dbReference>
<dbReference type="Pfam" id="PF02035">
    <property type="entry name" value="Coagulin"/>
    <property type="match status" value="1"/>
</dbReference>
<dbReference type="PIRSF" id="PIRSF002379">
    <property type="entry name" value="Coagulogen"/>
    <property type="match status" value="1"/>
</dbReference>
<dbReference type="PRINTS" id="PR00763">
    <property type="entry name" value="COAGULIN"/>
</dbReference>
<dbReference type="SUPFAM" id="SSF57501">
    <property type="entry name" value="Cystine-knot cytokines"/>
    <property type="match status" value="1"/>
</dbReference>
<feature type="signal peptide" evidence="2">
    <location>
        <begin position="1"/>
        <end position="20"/>
    </location>
</feature>
<feature type="chain" id="PRO_0000020956" description="Coagulin chain A">
    <location>
        <begin position="21"/>
        <end position="38"/>
    </location>
</feature>
<feature type="peptide" id="PRO_0000020957" description="Peptide C">
    <location>
        <begin position="39"/>
        <end position="66"/>
    </location>
</feature>
<feature type="chain" id="PRO_0000020958" description="Coagulin chain B">
    <location>
        <begin position="67"/>
        <end position="195"/>
    </location>
</feature>
<feature type="disulfide bond" description="Interchain (between A and B chains)" evidence="1">
    <location>
        <begin position="28"/>
        <end position="188"/>
    </location>
</feature>
<feature type="disulfide bond" description="Interchain (between A and B chains)" evidence="1">
    <location>
        <begin position="30"/>
        <end position="115"/>
    </location>
</feature>
<feature type="disulfide bond" evidence="1">
    <location>
        <begin position="80"/>
        <end position="182"/>
    </location>
</feature>
<feature type="disulfide bond" evidence="1">
    <location>
        <begin position="85"/>
        <end position="141"/>
    </location>
</feature>
<feature type="disulfide bond" evidence="1">
    <location>
        <begin position="95"/>
        <end position="189"/>
    </location>
</feature>
<feature type="disulfide bond" evidence="1">
    <location>
        <begin position="108"/>
        <end position="161"/>
    </location>
</feature>
<feature type="disulfide bond" evidence="1">
    <location>
        <begin position="147"/>
        <end position="191"/>
    </location>
</feature>
<feature type="disulfide bond" evidence="1">
    <location>
        <begin position="155"/>
        <end position="193"/>
    </location>
</feature>
<feature type="sequence conflict" description="In Ref. 2; AA sequence." evidence="3" ref="2">
    <original>H</original>
    <variation>S</variation>
    <location>
        <position position="102"/>
    </location>
</feature>
<feature type="sequence conflict" description="In Ref. 2; AA sequence." evidence="3" ref="2">
    <original>PS</original>
    <variation>HP</variation>
    <location>
        <begin position="105"/>
        <end position="106"/>
    </location>
</feature>